<accession>Q3IRX3</accession>
<keyword id="KW-0028">Amino-acid biosynthesis</keyword>
<keyword id="KW-0368">Histidine biosynthesis</keyword>
<keyword id="KW-0378">Hydrolase</keyword>
<keyword id="KW-0486">Methionine biosynthesis</keyword>
<keyword id="KW-0511">Multifunctional enzyme</keyword>
<keyword id="KW-0521">NADP</keyword>
<keyword id="KW-0554">One-carbon metabolism</keyword>
<keyword id="KW-0560">Oxidoreductase</keyword>
<keyword id="KW-0658">Purine biosynthesis</keyword>
<keyword id="KW-1185">Reference proteome</keyword>
<comment type="function">
    <text evidence="1">Catalyzes the oxidation of 5,10-methylenetetrahydrofolate to 5,10-methenyltetrahydrofolate and then the hydrolysis of 5,10-methenyltetrahydrofolate to 10-formyltetrahydrofolate.</text>
</comment>
<comment type="catalytic activity">
    <reaction evidence="1">
        <text>(6R)-5,10-methylene-5,6,7,8-tetrahydrofolate + NADP(+) = (6R)-5,10-methenyltetrahydrofolate + NADPH</text>
        <dbReference type="Rhea" id="RHEA:22812"/>
        <dbReference type="ChEBI" id="CHEBI:15636"/>
        <dbReference type="ChEBI" id="CHEBI:57455"/>
        <dbReference type="ChEBI" id="CHEBI:57783"/>
        <dbReference type="ChEBI" id="CHEBI:58349"/>
        <dbReference type="EC" id="1.5.1.5"/>
    </reaction>
</comment>
<comment type="catalytic activity">
    <reaction evidence="1">
        <text>(6R)-5,10-methenyltetrahydrofolate + H2O = (6R)-10-formyltetrahydrofolate + H(+)</text>
        <dbReference type="Rhea" id="RHEA:23700"/>
        <dbReference type="ChEBI" id="CHEBI:15377"/>
        <dbReference type="ChEBI" id="CHEBI:15378"/>
        <dbReference type="ChEBI" id="CHEBI:57455"/>
        <dbReference type="ChEBI" id="CHEBI:195366"/>
        <dbReference type="EC" id="3.5.4.9"/>
    </reaction>
</comment>
<comment type="pathway">
    <text evidence="1">One-carbon metabolism; tetrahydrofolate interconversion.</text>
</comment>
<comment type="subunit">
    <text evidence="1">Homodimer.</text>
</comment>
<comment type="similarity">
    <text evidence="1">Belongs to the tetrahydrofolate dehydrogenase/cyclohydrolase family.</text>
</comment>
<proteinExistence type="inferred from homology"/>
<reference key="1">
    <citation type="journal article" date="2005" name="Genome Res.">
        <title>Living with two extremes: conclusions from the genome sequence of Natronomonas pharaonis.</title>
        <authorList>
            <person name="Falb M."/>
            <person name="Pfeiffer F."/>
            <person name="Palm P."/>
            <person name="Rodewald K."/>
            <person name="Hickmann V."/>
            <person name="Tittor J."/>
            <person name="Oesterhelt D."/>
        </authorList>
    </citation>
    <scope>NUCLEOTIDE SEQUENCE [LARGE SCALE GENOMIC DNA]</scope>
    <source>
        <strain>ATCC 35678 / DSM 2160 / CIP 103997 / JCM 8858 / NBRC 14720 / NCIMB 2260 / Gabara</strain>
    </source>
</reference>
<organism>
    <name type="scientific">Natronomonas pharaonis (strain ATCC 35678 / DSM 2160 / CIP 103997 / JCM 8858 / NBRC 14720 / NCIMB 2260 / Gabara)</name>
    <name type="common">Halobacterium pharaonis</name>
    <dbReference type="NCBI Taxonomy" id="348780"/>
    <lineage>
        <taxon>Archaea</taxon>
        <taxon>Methanobacteriati</taxon>
        <taxon>Methanobacteriota</taxon>
        <taxon>Stenosarchaea group</taxon>
        <taxon>Halobacteria</taxon>
        <taxon>Halobacteriales</taxon>
        <taxon>Haloarculaceae</taxon>
        <taxon>Natronomonas</taxon>
    </lineage>
</organism>
<protein>
    <recommendedName>
        <fullName evidence="1">Bifunctional protein FolD</fullName>
    </recommendedName>
    <domain>
        <recommendedName>
            <fullName evidence="1">Methylenetetrahydrofolate dehydrogenase</fullName>
            <ecNumber evidence="1">1.5.1.5</ecNumber>
        </recommendedName>
    </domain>
    <domain>
        <recommendedName>
            <fullName evidence="1">Methenyltetrahydrofolate cyclohydrolase</fullName>
            <ecNumber evidence="1">3.5.4.9</ecNumber>
        </recommendedName>
    </domain>
</protein>
<evidence type="ECO:0000255" key="1">
    <source>
        <dbReference type="HAMAP-Rule" id="MF_01576"/>
    </source>
</evidence>
<gene>
    <name evidence="1" type="primary">folD</name>
    <name type="ordered locus">NP_2054A</name>
</gene>
<feature type="chain" id="PRO_0000268587" description="Bifunctional protein FolD">
    <location>
        <begin position="1"/>
        <end position="297"/>
    </location>
</feature>
<feature type="binding site" evidence="1">
    <location>
        <begin position="164"/>
        <end position="166"/>
    </location>
    <ligand>
        <name>NADP(+)</name>
        <dbReference type="ChEBI" id="CHEBI:58349"/>
    </ligand>
</feature>
<feature type="binding site" evidence="1">
    <location>
        <position position="193"/>
    </location>
    <ligand>
        <name>NADP(+)</name>
        <dbReference type="ChEBI" id="CHEBI:58349"/>
    </ligand>
</feature>
<feature type="binding site" evidence="1">
    <location>
        <position position="234"/>
    </location>
    <ligand>
        <name>NADP(+)</name>
        <dbReference type="ChEBI" id="CHEBI:58349"/>
    </ligand>
</feature>
<sequence length="297" mass="31496">MTEVIDGNAVASDIRDDLTDAIATLADAGARPGLATVLMGDDPASETYVNMKQRDCEEVGIESYHVDVDGDAPPETLYDEIAALNQNDDVHGYIVQAPVPDHVDYREVIRRVDPQKDVDGFHPENVGRLVAGDARFRPCTPHGVQKLLEAADIDTEGKDVTIVGRSDIVGKPLANLLIQKADDGNATVTVCHSRTENLAAKTRRADIVVAAAGAPELVDGSMIGEGSVVIDVGVNRVDADNEKGYELVGDVEYESATQNASAITPVPGGVGPMTRAMLLYNTVKAASLQEDIDVALP</sequence>
<name>FOLD_NATPD</name>
<dbReference type="EC" id="1.5.1.5" evidence="1"/>
<dbReference type="EC" id="3.5.4.9" evidence="1"/>
<dbReference type="EMBL" id="CR936257">
    <property type="protein sequence ID" value="CAI49118.1"/>
    <property type="molecule type" value="Genomic_DNA"/>
</dbReference>
<dbReference type="RefSeq" id="WP_011322747.1">
    <property type="nucleotide sequence ID" value="NC_007426.1"/>
</dbReference>
<dbReference type="SMR" id="Q3IRX3"/>
<dbReference type="STRING" id="348780.NP_2054A"/>
<dbReference type="EnsemblBacteria" id="CAI49118">
    <property type="protein sequence ID" value="CAI49118"/>
    <property type="gene ID" value="NP_2054A"/>
</dbReference>
<dbReference type="GeneID" id="3702724"/>
<dbReference type="KEGG" id="nph:NP_2054A"/>
<dbReference type="eggNOG" id="arCOG04538">
    <property type="taxonomic scope" value="Archaea"/>
</dbReference>
<dbReference type="HOGENOM" id="CLU_034045_1_2_2"/>
<dbReference type="OrthoDB" id="9455at2157"/>
<dbReference type="UniPathway" id="UPA00193"/>
<dbReference type="Proteomes" id="UP000002698">
    <property type="component" value="Chromosome"/>
</dbReference>
<dbReference type="GO" id="GO:0005829">
    <property type="term" value="C:cytosol"/>
    <property type="evidence" value="ECO:0007669"/>
    <property type="project" value="TreeGrafter"/>
</dbReference>
<dbReference type="GO" id="GO:0004477">
    <property type="term" value="F:methenyltetrahydrofolate cyclohydrolase activity"/>
    <property type="evidence" value="ECO:0007669"/>
    <property type="project" value="UniProtKB-UniRule"/>
</dbReference>
<dbReference type="GO" id="GO:0004488">
    <property type="term" value="F:methylenetetrahydrofolate dehydrogenase (NADP+) activity"/>
    <property type="evidence" value="ECO:0007669"/>
    <property type="project" value="UniProtKB-UniRule"/>
</dbReference>
<dbReference type="GO" id="GO:0000105">
    <property type="term" value="P:L-histidine biosynthetic process"/>
    <property type="evidence" value="ECO:0007669"/>
    <property type="project" value="UniProtKB-KW"/>
</dbReference>
<dbReference type="GO" id="GO:0009086">
    <property type="term" value="P:methionine biosynthetic process"/>
    <property type="evidence" value="ECO:0007669"/>
    <property type="project" value="UniProtKB-KW"/>
</dbReference>
<dbReference type="GO" id="GO:0006164">
    <property type="term" value="P:purine nucleotide biosynthetic process"/>
    <property type="evidence" value="ECO:0007669"/>
    <property type="project" value="UniProtKB-KW"/>
</dbReference>
<dbReference type="GO" id="GO:0035999">
    <property type="term" value="P:tetrahydrofolate interconversion"/>
    <property type="evidence" value="ECO:0007669"/>
    <property type="project" value="UniProtKB-UniRule"/>
</dbReference>
<dbReference type="CDD" id="cd01080">
    <property type="entry name" value="NAD_bind_m-THF_DH_Cyclohyd"/>
    <property type="match status" value="1"/>
</dbReference>
<dbReference type="FunFam" id="3.40.50.720:FF:000189">
    <property type="entry name" value="Bifunctional protein FolD"/>
    <property type="match status" value="1"/>
</dbReference>
<dbReference type="FunFam" id="3.40.50.10860:FF:000005">
    <property type="entry name" value="C-1-tetrahydrofolate synthase, cytoplasmic, putative"/>
    <property type="match status" value="1"/>
</dbReference>
<dbReference type="Gene3D" id="3.40.50.10860">
    <property type="entry name" value="Leucine Dehydrogenase, chain A, domain 1"/>
    <property type="match status" value="1"/>
</dbReference>
<dbReference type="Gene3D" id="3.40.50.720">
    <property type="entry name" value="NAD(P)-binding Rossmann-like Domain"/>
    <property type="match status" value="1"/>
</dbReference>
<dbReference type="HAMAP" id="MF_01576">
    <property type="entry name" value="THF_DHG_CYH"/>
    <property type="match status" value="1"/>
</dbReference>
<dbReference type="InterPro" id="IPR046346">
    <property type="entry name" value="Aminoacid_DH-like_N_sf"/>
</dbReference>
<dbReference type="InterPro" id="IPR036291">
    <property type="entry name" value="NAD(P)-bd_dom_sf"/>
</dbReference>
<dbReference type="InterPro" id="IPR000672">
    <property type="entry name" value="THF_DH/CycHdrlase"/>
</dbReference>
<dbReference type="InterPro" id="IPR020630">
    <property type="entry name" value="THF_DH/CycHdrlase_cat_dom"/>
</dbReference>
<dbReference type="InterPro" id="IPR020631">
    <property type="entry name" value="THF_DH/CycHdrlase_NAD-bd_dom"/>
</dbReference>
<dbReference type="NCBIfam" id="NF010764">
    <property type="entry name" value="PRK14167.1"/>
    <property type="match status" value="1"/>
</dbReference>
<dbReference type="PANTHER" id="PTHR48099:SF5">
    <property type="entry name" value="C-1-TETRAHYDROFOLATE SYNTHASE, CYTOPLASMIC"/>
    <property type="match status" value="1"/>
</dbReference>
<dbReference type="PANTHER" id="PTHR48099">
    <property type="entry name" value="C-1-TETRAHYDROFOLATE SYNTHASE, CYTOPLASMIC-RELATED"/>
    <property type="match status" value="1"/>
</dbReference>
<dbReference type="Pfam" id="PF00763">
    <property type="entry name" value="THF_DHG_CYH"/>
    <property type="match status" value="1"/>
</dbReference>
<dbReference type="Pfam" id="PF02882">
    <property type="entry name" value="THF_DHG_CYH_C"/>
    <property type="match status" value="1"/>
</dbReference>
<dbReference type="PRINTS" id="PR00085">
    <property type="entry name" value="THFDHDRGNASE"/>
</dbReference>
<dbReference type="SUPFAM" id="SSF53223">
    <property type="entry name" value="Aminoacid dehydrogenase-like, N-terminal domain"/>
    <property type="match status" value="1"/>
</dbReference>
<dbReference type="SUPFAM" id="SSF51735">
    <property type="entry name" value="NAD(P)-binding Rossmann-fold domains"/>
    <property type="match status" value="1"/>
</dbReference>